<organism>
    <name type="scientific">Xanthomonas campestris pv. campestris (strain B100)</name>
    <dbReference type="NCBI Taxonomy" id="509169"/>
    <lineage>
        <taxon>Bacteria</taxon>
        <taxon>Pseudomonadati</taxon>
        <taxon>Pseudomonadota</taxon>
        <taxon>Gammaproteobacteria</taxon>
        <taxon>Lysobacterales</taxon>
        <taxon>Lysobacteraceae</taxon>
        <taxon>Xanthomonas</taxon>
    </lineage>
</organism>
<feature type="chain" id="PRO_1000092759" description="ATP phosphoribosyltransferase">
    <location>
        <begin position="1"/>
        <end position="304"/>
    </location>
</feature>
<reference key="1">
    <citation type="journal article" date="2008" name="J. Biotechnol.">
        <title>The genome of Xanthomonas campestris pv. campestris B100 and its use for the reconstruction of metabolic pathways involved in xanthan biosynthesis.</title>
        <authorList>
            <person name="Vorhoelter F.-J."/>
            <person name="Schneiker S."/>
            <person name="Goesmann A."/>
            <person name="Krause L."/>
            <person name="Bekel T."/>
            <person name="Kaiser O."/>
            <person name="Linke B."/>
            <person name="Patschkowski T."/>
            <person name="Rueckert C."/>
            <person name="Schmid J."/>
            <person name="Sidhu V.K."/>
            <person name="Sieber V."/>
            <person name="Tauch A."/>
            <person name="Watt S.A."/>
            <person name="Weisshaar B."/>
            <person name="Becker A."/>
            <person name="Niehaus K."/>
            <person name="Puehler A."/>
        </authorList>
    </citation>
    <scope>NUCLEOTIDE SEQUENCE [LARGE SCALE GENOMIC DNA]</scope>
    <source>
        <strain>B100</strain>
    </source>
</reference>
<comment type="function">
    <text evidence="1">Catalyzes the condensation of ATP and 5-phosphoribose 1-diphosphate to form N'-(5'-phosphoribosyl)-ATP (PR-ATP). Has a crucial role in the pathway because the rate of histidine biosynthesis seems to be controlled primarily by regulation of HisG enzymatic activity.</text>
</comment>
<comment type="catalytic activity">
    <reaction evidence="1">
        <text>1-(5-phospho-beta-D-ribosyl)-ATP + diphosphate = 5-phospho-alpha-D-ribose 1-diphosphate + ATP</text>
        <dbReference type="Rhea" id="RHEA:18473"/>
        <dbReference type="ChEBI" id="CHEBI:30616"/>
        <dbReference type="ChEBI" id="CHEBI:33019"/>
        <dbReference type="ChEBI" id="CHEBI:58017"/>
        <dbReference type="ChEBI" id="CHEBI:73183"/>
        <dbReference type="EC" id="2.4.2.17"/>
    </reaction>
</comment>
<comment type="cofactor">
    <cofactor evidence="1">
        <name>Mg(2+)</name>
        <dbReference type="ChEBI" id="CHEBI:18420"/>
    </cofactor>
</comment>
<comment type="activity regulation">
    <text evidence="1">Feedback inhibited by histidine.</text>
</comment>
<comment type="pathway">
    <text evidence="1">Amino-acid biosynthesis; L-histidine biosynthesis; L-histidine from 5-phospho-alpha-D-ribose 1-diphosphate: step 1/9.</text>
</comment>
<comment type="subcellular location">
    <subcellularLocation>
        <location evidence="1">Cytoplasm</location>
    </subcellularLocation>
</comment>
<comment type="similarity">
    <text evidence="1">Belongs to the ATP phosphoribosyltransferase family. Long subfamily.</text>
</comment>
<keyword id="KW-0028">Amino-acid biosynthesis</keyword>
<keyword id="KW-0067">ATP-binding</keyword>
<keyword id="KW-0963">Cytoplasm</keyword>
<keyword id="KW-0328">Glycosyltransferase</keyword>
<keyword id="KW-0368">Histidine biosynthesis</keyword>
<keyword id="KW-0460">Magnesium</keyword>
<keyword id="KW-0479">Metal-binding</keyword>
<keyword id="KW-0547">Nucleotide-binding</keyword>
<keyword id="KW-0808">Transferase</keyword>
<dbReference type="EC" id="2.4.2.17" evidence="1"/>
<dbReference type="EMBL" id="AM920689">
    <property type="protein sequence ID" value="CAP51448.1"/>
    <property type="molecule type" value="Genomic_DNA"/>
</dbReference>
<dbReference type="SMR" id="B0RSL3"/>
<dbReference type="KEGG" id="xca:xcc-b100_2095"/>
<dbReference type="HOGENOM" id="CLU_038115_1_0_6"/>
<dbReference type="UniPathway" id="UPA00031">
    <property type="reaction ID" value="UER00006"/>
</dbReference>
<dbReference type="Proteomes" id="UP000001188">
    <property type="component" value="Chromosome"/>
</dbReference>
<dbReference type="GO" id="GO:0005737">
    <property type="term" value="C:cytoplasm"/>
    <property type="evidence" value="ECO:0007669"/>
    <property type="project" value="UniProtKB-SubCell"/>
</dbReference>
<dbReference type="GO" id="GO:0005524">
    <property type="term" value="F:ATP binding"/>
    <property type="evidence" value="ECO:0007669"/>
    <property type="project" value="UniProtKB-KW"/>
</dbReference>
<dbReference type="GO" id="GO:0003879">
    <property type="term" value="F:ATP phosphoribosyltransferase activity"/>
    <property type="evidence" value="ECO:0007669"/>
    <property type="project" value="UniProtKB-UniRule"/>
</dbReference>
<dbReference type="GO" id="GO:0000287">
    <property type="term" value="F:magnesium ion binding"/>
    <property type="evidence" value="ECO:0007669"/>
    <property type="project" value="UniProtKB-UniRule"/>
</dbReference>
<dbReference type="GO" id="GO:0000105">
    <property type="term" value="P:L-histidine biosynthetic process"/>
    <property type="evidence" value="ECO:0007669"/>
    <property type="project" value="UniProtKB-UniRule"/>
</dbReference>
<dbReference type="FunFam" id="3.40.190.10:FF:000008">
    <property type="entry name" value="ATP phosphoribosyltransferase"/>
    <property type="match status" value="1"/>
</dbReference>
<dbReference type="Gene3D" id="3.30.70.120">
    <property type="match status" value="1"/>
</dbReference>
<dbReference type="Gene3D" id="3.40.190.10">
    <property type="entry name" value="Periplasmic binding protein-like II"/>
    <property type="match status" value="2"/>
</dbReference>
<dbReference type="HAMAP" id="MF_00079">
    <property type="entry name" value="HisG_Long"/>
    <property type="match status" value="1"/>
</dbReference>
<dbReference type="InterPro" id="IPR020621">
    <property type="entry name" value="ATP-PRT_HisG_long"/>
</dbReference>
<dbReference type="InterPro" id="IPR013820">
    <property type="entry name" value="ATP_PRibTrfase_cat"/>
</dbReference>
<dbReference type="InterPro" id="IPR018198">
    <property type="entry name" value="ATP_PRibTrfase_CS"/>
</dbReference>
<dbReference type="InterPro" id="IPR001348">
    <property type="entry name" value="ATP_PRibTrfase_HisG"/>
</dbReference>
<dbReference type="InterPro" id="IPR013115">
    <property type="entry name" value="HisG_C"/>
</dbReference>
<dbReference type="InterPro" id="IPR015867">
    <property type="entry name" value="N-reg_PII/ATP_PRibTrfase_C"/>
</dbReference>
<dbReference type="NCBIfam" id="TIGR00070">
    <property type="entry name" value="hisG"/>
    <property type="match status" value="1"/>
</dbReference>
<dbReference type="NCBIfam" id="TIGR03455">
    <property type="entry name" value="HisG_C-term"/>
    <property type="match status" value="1"/>
</dbReference>
<dbReference type="PANTHER" id="PTHR21403:SF8">
    <property type="entry name" value="ATP PHOSPHORIBOSYLTRANSFERASE"/>
    <property type="match status" value="1"/>
</dbReference>
<dbReference type="PANTHER" id="PTHR21403">
    <property type="entry name" value="ATP PHOSPHORIBOSYLTRANSFERASE ATP-PRTASE"/>
    <property type="match status" value="1"/>
</dbReference>
<dbReference type="Pfam" id="PF01634">
    <property type="entry name" value="HisG"/>
    <property type="match status" value="1"/>
</dbReference>
<dbReference type="SUPFAM" id="SSF53850">
    <property type="entry name" value="Periplasmic binding protein-like II"/>
    <property type="match status" value="1"/>
</dbReference>
<dbReference type="PROSITE" id="PS01316">
    <property type="entry name" value="ATP_P_PHORIBOSYLTR"/>
    <property type="match status" value="1"/>
</dbReference>
<name>HIS1_XANCB</name>
<evidence type="ECO:0000255" key="1">
    <source>
        <dbReference type="HAMAP-Rule" id="MF_00079"/>
    </source>
</evidence>
<sequence>MSASTAAPARDRLRIAIQKNGRLAEPARSLLAACGLSWRQSRDKLFCYGESLPVDLLLVRDDDIPGLIADGVCDLGIVGQNELDEQASARRRAGLPAAYHAVRGVGFGQCRLMLAVPEEWEWQGVAQLAGKRIATSYPAILADWLERQGIDASVVELSGSVEIAPRLGTADLICDLVSSGATLAANQLKPVELVMESEAVLAGAVREPADARAALLAMLLRRMDGVLKLRDSKLLMFRAEQGNVDALRRLLPDADPLVQLPDDGNGALRLQTMCHGAVTWQRLEELERAGAQGLMVLTVERSLA</sequence>
<gene>
    <name evidence="1" type="primary">hisG</name>
    <name type="ordered locus">xcc-b100_2095</name>
</gene>
<protein>
    <recommendedName>
        <fullName evidence="1">ATP phosphoribosyltransferase</fullName>
        <shortName evidence="1">ATP-PRT</shortName>
        <shortName evidence="1">ATP-PRTase</shortName>
        <ecNumber evidence="1">2.4.2.17</ecNumber>
    </recommendedName>
</protein>
<proteinExistence type="inferred from homology"/>
<accession>B0RSL3</accession>